<accession>Q8DJE9</accession>
<gene>
    <name type="ordered locus">tll1276</name>
</gene>
<keyword id="KW-0002">3D-structure</keyword>
<keyword id="KW-0113">Calvin cycle</keyword>
<keyword id="KW-0119">Carbohydrate metabolism</keyword>
<keyword id="KW-0378">Hydrolase</keyword>
<keyword id="KW-0464">Manganese</keyword>
<keyword id="KW-0479">Metal-binding</keyword>
<keyword id="KW-1185">Reference proteome</keyword>
<dbReference type="EC" id="3.1.3.11"/>
<dbReference type="EC" id="3.1.3.37"/>
<dbReference type="EMBL" id="BA000039">
    <property type="protein sequence ID" value="BAC08828.1"/>
    <property type="molecule type" value="Genomic_DNA"/>
</dbReference>
<dbReference type="RefSeq" id="NP_682066.1">
    <property type="nucleotide sequence ID" value="NC_004113.1"/>
</dbReference>
<dbReference type="RefSeq" id="WP_011057116.1">
    <property type="nucleotide sequence ID" value="NC_004113.1"/>
</dbReference>
<dbReference type="PDB" id="5A5L">
    <property type="method" value="X-ray"/>
    <property type="resolution" value="2.34 A"/>
    <property type="chains" value="A=1-347"/>
</dbReference>
<dbReference type="PDBsum" id="5A5L"/>
<dbReference type="SMR" id="Q8DJE9"/>
<dbReference type="STRING" id="197221.gene:10747872"/>
<dbReference type="EnsemblBacteria" id="BAC08828">
    <property type="protein sequence ID" value="BAC08828"/>
    <property type="gene ID" value="BAC08828"/>
</dbReference>
<dbReference type="KEGG" id="tel:tll1276"/>
<dbReference type="PATRIC" id="fig|197221.4.peg.1343"/>
<dbReference type="eggNOG" id="COG1494">
    <property type="taxonomic scope" value="Bacteria"/>
</dbReference>
<dbReference type="BRENDA" id="3.1.3.11">
    <property type="organism ID" value="7763"/>
</dbReference>
<dbReference type="BRENDA" id="3.1.3.37">
    <property type="organism ID" value="7763"/>
</dbReference>
<dbReference type="UniPathway" id="UPA00116"/>
<dbReference type="EvolutionaryTrace" id="Q8DJE9"/>
<dbReference type="Proteomes" id="UP000000440">
    <property type="component" value="Chromosome"/>
</dbReference>
<dbReference type="GO" id="GO:0005829">
    <property type="term" value="C:cytosol"/>
    <property type="evidence" value="ECO:0007669"/>
    <property type="project" value="TreeGrafter"/>
</dbReference>
<dbReference type="GO" id="GO:0042132">
    <property type="term" value="F:fructose 1,6-bisphosphate 1-phosphatase activity"/>
    <property type="evidence" value="ECO:0007669"/>
    <property type="project" value="UniProtKB-EC"/>
</dbReference>
<dbReference type="GO" id="GO:0046872">
    <property type="term" value="F:metal ion binding"/>
    <property type="evidence" value="ECO:0007669"/>
    <property type="project" value="UniProtKB-KW"/>
</dbReference>
<dbReference type="GO" id="GO:0050278">
    <property type="term" value="F:sedoheptulose-bisphosphatase activity"/>
    <property type="evidence" value="ECO:0007669"/>
    <property type="project" value="UniProtKB-EC"/>
</dbReference>
<dbReference type="GO" id="GO:0030388">
    <property type="term" value="P:fructose 1,6-bisphosphate metabolic process"/>
    <property type="evidence" value="ECO:0007669"/>
    <property type="project" value="TreeGrafter"/>
</dbReference>
<dbReference type="GO" id="GO:0006094">
    <property type="term" value="P:gluconeogenesis"/>
    <property type="evidence" value="ECO:0007669"/>
    <property type="project" value="InterPro"/>
</dbReference>
<dbReference type="GO" id="GO:0006071">
    <property type="term" value="P:glycerol metabolic process"/>
    <property type="evidence" value="ECO:0007669"/>
    <property type="project" value="InterPro"/>
</dbReference>
<dbReference type="GO" id="GO:0019253">
    <property type="term" value="P:reductive pentose-phosphate cycle"/>
    <property type="evidence" value="ECO:0007669"/>
    <property type="project" value="UniProtKB-UniPathway"/>
</dbReference>
<dbReference type="CDD" id="cd01516">
    <property type="entry name" value="FBPase_glpX"/>
    <property type="match status" value="1"/>
</dbReference>
<dbReference type="FunFam" id="3.40.190.90:FF:000001">
    <property type="entry name" value="Fructose-1,6-bisphosphatase"/>
    <property type="match status" value="1"/>
</dbReference>
<dbReference type="Gene3D" id="3.40.190.90">
    <property type="match status" value="1"/>
</dbReference>
<dbReference type="Gene3D" id="3.30.540.10">
    <property type="entry name" value="Fructose-1,6-Bisphosphatase, subunit A, domain 1"/>
    <property type="match status" value="1"/>
</dbReference>
<dbReference type="InterPro" id="IPR004464">
    <property type="entry name" value="FBPase_class-2/SBPase"/>
</dbReference>
<dbReference type="NCBIfam" id="TIGR00330">
    <property type="entry name" value="glpX"/>
    <property type="match status" value="1"/>
</dbReference>
<dbReference type="PANTHER" id="PTHR30447:SF0">
    <property type="entry name" value="FRUCTOSE-1,6-BISPHOSPHATASE 1 CLASS 2-RELATED"/>
    <property type="match status" value="1"/>
</dbReference>
<dbReference type="PANTHER" id="PTHR30447">
    <property type="entry name" value="FRUCTOSE-1,6-BISPHOSPHATASE CLASS 2"/>
    <property type="match status" value="1"/>
</dbReference>
<dbReference type="Pfam" id="PF03320">
    <property type="entry name" value="FBPase_glpX"/>
    <property type="match status" value="1"/>
</dbReference>
<dbReference type="PIRSF" id="PIRSF004532">
    <property type="entry name" value="GlpX"/>
    <property type="match status" value="1"/>
</dbReference>
<dbReference type="SUPFAM" id="SSF56655">
    <property type="entry name" value="Carbohydrate phosphatase"/>
    <property type="match status" value="1"/>
</dbReference>
<evidence type="ECO:0000250" key="1"/>
<evidence type="ECO:0000305" key="2"/>
<evidence type="ECO:0007829" key="3">
    <source>
        <dbReference type="PDB" id="5A5L"/>
    </source>
</evidence>
<organism>
    <name type="scientific">Thermosynechococcus vestitus (strain NIES-2133 / IAM M-273 / BP-1)</name>
    <dbReference type="NCBI Taxonomy" id="197221"/>
    <lineage>
        <taxon>Bacteria</taxon>
        <taxon>Bacillati</taxon>
        <taxon>Cyanobacteriota</taxon>
        <taxon>Cyanophyceae</taxon>
        <taxon>Acaryochloridales</taxon>
        <taxon>Thermosynechococcaceae</taxon>
        <taxon>Thermosynechococcus</taxon>
    </lineage>
</organism>
<comment type="function">
    <text evidence="1">Catalyzes the hydrolysis of fructose 1,6-bisphosphate (Fru 1,6-P2) and sedoheptulose 1,7-bisphosphate (Sed 1,7-P2) to fructose 6-phosphate and sedoheptulose 7-phosphate, respectively.</text>
</comment>
<comment type="catalytic activity">
    <reaction>
        <text>beta-D-fructose 1,6-bisphosphate + H2O = beta-D-fructose 6-phosphate + phosphate</text>
        <dbReference type="Rhea" id="RHEA:11064"/>
        <dbReference type="ChEBI" id="CHEBI:15377"/>
        <dbReference type="ChEBI" id="CHEBI:32966"/>
        <dbReference type="ChEBI" id="CHEBI:43474"/>
        <dbReference type="ChEBI" id="CHEBI:57634"/>
        <dbReference type="EC" id="3.1.3.11"/>
    </reaction>
</comment>
<comment type="catalytic activity">
    <reaction>
        <text>D-sedoheptulose 1,7-bisphosphate + H2O = D-sedoheptulose 7-phosphate + phosphate</text>
        <dbReference type="Rhea" id="RHEA:17461"/>
        <dbReference type="ChEBI" id="CHEBI:15377"/>
        <dbReference type="ChEBI" id="CHEBI:43474"/>
        <dbReference type="ChEBI" id="CHEBI:57483"/>
        <dbReference type="ChEBI" id="CHEBI:58335"/>
        <dbReference type="EC" id="3.1.3.37"/>
    </reaction>
</comment>
<comment type="cofactor">
    <cofactor evidence="1">
        <name>Mn(2+)</name>
        <dbReference type="ChEBI" id="CHEBI:29035"/>
    </cofactor>
</comment>
<comment type="pathway">
    <text>Carbohydrate biosynthesis; Calvin cycle.</text>
</comment>
<comment type="subunit">
    <text evidence="1">Homotetramer.</text>
</comment>
<comment type="similarity">
    <text evidence="2">Belongs to the FBPase class 2 family.</text>
</comment>
<feature type="chain" id="PRO_0000342724" description="D-fructose 1,6-bisphosphatase class 2/sedoheptulose 1,7-bisphosphatase">
    <location>
        <begin position="1"/>
        <end position="347"/>
    </location>
</feature>
<feature type="binding site" evidence="1">
    <location>
        <position position="33"/>
    </location>
    <ligand>
        <name>Mn(2+)</name>
        <dbReference type="ChEBI" id="CHEBI:29035"/>
        <label>1</label>
    </ligand>
</feature>
<feature type="binding site" evidence="1">
    <location>
        <position position="57"/>
    </location>
    <ligand>
        <name>Mn(2+)</name>
        <dbReference type="ChEBI" id="CHEBI:29035"/>
        <label>1</label>
    </ligand>
</feature>
<feature type="binding site" evidence="1">
    <location>
        <position position="97"/>
    </location>
    <ligand>
        <name>Mn(2+)</name>
        <dbReference type="ChEBI" id="CHEBI:29035"/>
        <label>2</label>
    </ligand>
</feature>
<feature type="binding site" evidence="1">
    <location>
        <begin position="100"/>
        <end position="102"/>
    </location>
    <ligand>
        <name>substrate</name>
    </ligand>
</feature>
<feature type="binding site" evidence="1">
    <location>
        <position position="100"/>
    </location>
    <ligand>
        <name>Mn(2+)</name>
        <dbReference type="ChEBI" id="CHEBI:29035"/>
        <label>2</label>
    </ligand>
</feature>
<feature type="binding site" evidence="1">
    <location>
        <position position="131"/>
    </location>
    <ligand>
        <name>substrate</name>
    </ligand>
</feature>
<feature type="binding site" evidence="1">
    <location>
        <begin position="176"/>
        <end position="178"/>
    </location>
    <ligand>
        <name>substrate</name>
    </ligand>
</feature>
<feature type="binding site" evidence="1">
    <location>
        <begin position="198"/>
        <end position="200"/>
    </location>
    <ligand>
        <name>substrate</name>
    </ligand>
</feature>
<feature type="binding site" evidence="1">
    <location>
        <position position="225"/>
    </location>
    <ligand>
        <name>Mn(2+)</name>
        <dbReference type="ChEBI" id="CHEBI:29035"/>
        <label>2</label>
    </ligand>
</feature>
<feature type="helix" evidence="3">
    <location>
        <begin position="5"/>
        <end position="21"/>
    </location>
</feature>
<feature type="turn" evidence="3">
    <location>
        <begin position="22"/>
        <end position="25"/>
    </location>
</feature>
<feature type="helix" evidence="3">
    <location>
        <begin position="29"/>
        <end position="44"/>
    </location>
</feature>
<feature type="strand" evidence="3">
    <location>
        <begin position="50"/>
        <end position="57"/>
    </location>
</feature>
<feature type="turn" evidence="3">
    <location>
        <begin position="60"/>
        <end position="62"/>
    </location>
</feature>
<feature type="strand" evidence="3">
    <location>
        <begin position="64"/>
        <end position="66"/>
    </location>
</feature>
<feature type="strand" evidence="3">
    <location>
        <begin position="71"/>
        <end position="73"/>
    </location>
</feature>
<feature type="helix" evidence="3">
    <location>
        <begin position="74"/>
        <end position="76"/>
    </location>
</feature>
<feature type="helix" evidence="3">
    <location>
        <begin position="80"/>
        <end position="82"/>
    </location>
</feature>
<feature type="turn" evidence="3">
    <location>
        <begin position="86"/>
        <end position="89"/>
    </location>
</feature>
<feature type="strand" evidence="3">
    <location>
        <begin position="90"/>
        <end position="100"/>
    </location>
</feature>
<feature type="helix" evidence="3">
    <location>
        <begin position="102"/>
        <end position="106"/>
    </location>
</feature>
<feature type="strand" evidence="3">
    <location>
        <begin position="113"/>
        <end position="120"/>
    </location>
</feature>
<feature type="strand" evidence="3">
    <location>
        <begin position="131"/>
        <end position="137"/>
    </location>
</feature>
<feature type="helix" evidence="3">
    <location>
        <begin position="139"/>
        <end position="141"/>
    </location>
</feature>
<feature type="turn" evidence="3">
    <location>
        <begin position="142"/>
        <end position="144"/>
    </location>
</feature>
<feature type="helix" evidence="3">
    <location>
        <begin position="151"/>
        <end position="162"/>
    </location>
</feature>
<feature type="helix" evidence="3">
    <location>
        <begin position="166"/>
        <end position="168"/>
    </location>
</feature>
<feature type="strand" evidence="3">
    <location>
        <begin position="170"/>
        <end position="174"/>
    </location>
</feature>
<feature type="helix" evidence="3">
    <location>
        <begin position="177"/>
        <end position="179"/>
    </location>
</feature>
<feature type="helix" evidence="3">
    <location>
        <begin position="180"/>
        <end position="189"/>
    </location>
</feature>
<feature type="strand" evidence="3">
    <location>
        <begin position="192"/>
        <end position="198"/>
    </location>
</feature>
<feature type="helix" evidence="3">
    <location>
        <begin position="200"/>
        <end position="206"/>
    </location>
</feature>
<feature type="strand" evidence="3">
    <location>
        <begin position="216"/>
        <end position="222"/>
    </location>
</feature>
<feature type="helix" evidence="3">
    <location>
        <begin position="223"/>
        <end position="236"/>
    </location>
</feature>
<feature type="strand" evidence="3">
    <location>
        <begin position="239"/>
        <end position="245"/>
    </location>
</feature>
<feature type="helix" evidence="3">
    <location>
        <begin position="248"/>
        <end position="251"/>
    </location>
</feature>
<feature type="turn" evidence="3">
    <location>
        <begin position="255"/>
        <end position="258"/>
    </location>
</feature>
<feature type="helix" evidence="3">
    <location>
        <begin position="261"/>
        <end position="270"/>
    </location>
</feature>
<feature type="strand" evidence="3">
    <location>
        <begin position="279"/>
        <end position="281"/>
    </location>
</feature>
<feature type="helix" evidence="3">
    <location>
        <begin position="282"/>
        <end position="285"/>
    </location>
</feature>
<feature type="strand" evidence="3">
    <location>
        <begin position="292"/>
        <end position="299"/>
    </location>
</feature>
<feature type="strand" evidence="3">
    <location>
        <begin position="302"/>
        <end position="304"/>
    </location>
</feature>
<feature type="strand" evidence="3">
    <location>
        <begin position="308"/>
        <end position="310"/>
    </location>
</feature>
<feature type="strand" evidence="3">
    <location>
        <begin position="313"/>
        <end position="322"/>
    </location>
</feature>
<feature type="turn" evidence="3">
    <location>
        <begin position="323"/>
        <end position="326"/>
    </location>
</feature>
<feature type="strand" evidence="3">
    <location>
        <begin position="327"/>
        <end position="336"/>
    </location>
</feature>
<proteinExistence type="evidence at protein level"/>
<name>FBSB_THEVB</name>
<reference key="1">
    <citation type="journal article" date="2002" name="DNA Res.">
        <title>Complete genome structure of the thermophilic cyanobacterium Thermosynechococcus elongatus BP-1.</title>
        <authorList>
            <person name="Nakamura Y."/>
            <person name="Kaneko T."/>
            <person name="Sato S."/>
            <person name="Ikeuchi M."/>
            <person name="Katoh H."/>
            <person name="Sasamoto S."/>
            <person name="Watanabe A."/>
            <person name="Iriguchi M."/>
            <person name="Kawashima K."/>
            <person name="Kimura T."/>
            <person name="Kishida Y."/>
            <person name="Kiyokawa C."/>
            <person name="Kohara M."/>
            <person name="Matsumoto M."/>
            <person name="Matsuno A."/>
            <person name="Nakazaki N."/>
            <person name="Shimpo S."/>
            <person name="Sugimoto M."/>
            <person name="Takeuchi C."/>
            <person name="Yamada M."/>
            <person name="Tabata S."/>
        </authorList>
    </citation>
    <scope>NUCLEOTIDE SEQUENCE [LARGE SCALE GENOMIC DNA]</scope>
    <source>
        <strain>NIES-2133 / IAM M-273 / BP-1</strain>
    </source>
</reference>
<sequence length="347" mass="37492">MDNVIGLEIIEVVEQAAIASARWMGKGDKNMADQAAVDAMRNRMNQIHMRGRIVIGEGERDEAPMLYIGEEVGICTRPDAAQYCNPEELIEIDIAVDPCEGTNLCAYGQPGSMAVLAISEKGGLFAAPDFYMKKLAAPPAAKGKVDIRNSATENLKILSECLDRAIDELVVVVMKRDRHNDLIQEIRDAGARVQLISDGDVSAALACAFSGTNIHALMGIGAAPEGVISAAAMRALGGHFQGQLVYDPAVVMTKEWANRTREGNLEELKKAGITDPDKVYEAEELASGETVLFAACGITPGMLMKGVRFFKGGARTQSLVISTQSKTARFVDTIHMFDQQLKSLQLY</sequence>
<protein>
    <recommendedName>
        <fullName>D-fructose 1,6-bisphosphatase class 2/sedoheptulose 1,7-bisphosphatase</fullName>
        <shortName>FBPase class 2/SBPase</shortName>
        <ecNumber>3.1.3.11</ecNumber>
        <ecNumber>3.1.3.37</ecNumber>
    </recommendedName>
</protein>